<accession>Q2UI81</accession>
<feature type="signal peptide" evidence="2">
    <location>
        <begin position="1"/>
        <end position="21"/>
    </location>
</feature>
<feature type="chain" id="PRO_0000394940" description="Probable feruloyl esterase C">
    <location>
        <begin position="22"/>
        <end position="270"/>
    </location>
</feature>
<feature type="glycosylation site" description="N-linked (GlcNAc...) asparagine" evidence="2">
    <location>
        <position position="23"/>
    </location>
</feature>
<organism>
    <name type="scientific">Aspergillus oryzae (strain ATCC 42149 / RIB 40)</name>
    <name type="common">Yellow koji mold</name>
    <dbReference type="NCBI Taxonomy" id="510516"/>
    <lineage>
        <taxon>Eukaryota</taxon>
        <taxon>Fungi</taxon>
        <taxon>Dikarya</taxon>
        <taxon>Ascomycota</taxon>
        <taxon>Pezizomycotina</taxon>
        <taxon>Eurotiomycetes</taxon>
        <taxon>Eurotiomycetidae</taxon>
        <taxon>Eurotiales</taxon>
        <taxon>Aspergillaceae</taxon>
        <taxon>Aspergillus</taxon>
        <taxon>Aspergillus subgen. Circumdati</taxon>
    </lineage>
</organism>
<gene>
    <name type="primary">faeC</name>
    <name type="ORF">AO090023000158</name>
</gene>
<proteinExistence type="inferred from homology"/>
<name>FAEC_ASPOR</name>
<protein>
    <recommendedName>
        <fullName>Probable feruloyl esterase C</fullName>
        <ecNumber>3.1.1.73</ecNumber>
    </recommendedName>
    <alternativeName>
        <fullName>Ferulic acid esterase C</fullName>
    </alternativeName>
</protein>
<reference key="1">
    <citation type="journal article" date="2005" name="Nature">
        <title>Genome sequencing and analysis of Aspergillus oryzae.</title>
        <authorList>
            <person name="Machida M."/>
            <person name="Asai K."/>
            <person name="Sano M."/>
            <person name="Tanaka T."/>
            <person name="Kumagai T."/>
            <person name="Terai G."/>
            <person name="Kusumoto K."/>
            <person name="Arima T."/>
            <person name="Akita O."/>
            <person name="Kashiwagi Y."/>
            <person name="Abe K."/>
            <person name="Gomi K."/>
            <person name="Horiuchi H."/>
            <person name="Kitamoto K."/>
            <person name="Kobayashi T."/>
            <person name="Takeuchi M."/>
            <person name="Denning D.W."/>
            <person name="Galagan J.E."/>
            <person name="Nierman W.C."/>
            <person name="Yu J."/>
            <person name="Archer D.B."/>
            <person name="Bennett J.W."/>
            <person name="Bhatnagar D."/>
            <person name="Cleveland T.E."/>
            <person name="Fedorova N.D."/>
            <person name="Gotoh O."/>
            <person name="Horikawa H."/>
            <person name="Hosoyama A."/>
            <person name="Ichinomiya M."/>
            <person name="Igarashi R."/>
            <person name="Iwashita K."/>
            <person name="Juvvadi P.R."/>
            <person name="Kato M."/>
            <person name="Kato Y."/>
            <person name="Kin T."/>
            <person name="Kokubun A."/>
            <person name="Maeda H."/>
            <person name="Maeyama N."/>
            <person name="Maruyama J."/>
            <person name="Nagasaki H."/>
            <person name="Nakajima T."/>
            <person name="Oda K."/>
            <person name="Okada K."/>
            <person name="Paulsen I."/>
            <person name="Sakamoto K."/>
            <person name="Sawano T."/>
            <person name="Takahashi M."/>
            <person name="Takase K."/>
            <person name="Terabayashi Y."/>
            <person name="Wortman J.R."/>
            <person name="Yamada O."/>
            <person name="Yamagata Y."/>
            <person name="Anazawa H."/>
            <person name="Hata Y."/>
            <person name="Koide Y."/>
            <person name="Komori T."/>
            <person name="Koyama Y."/>
            <person name="Minetoki T."/>
            <person name="Suharnan S."/>
            <person name="Tanaka A."/>
            <person name="Isono K."/>
            <person name="Kuhara S."/>
            <person name="Ogasawara N."/>
            <person name="Kikuchi H."/>
        </authorList>
    </citation>
    <scope>NUCLEOTIDE SEQUENCE [LARGE SCALE GENOMIC DNA]</scope>
    <source>
        <strain>ATCC 42149 / RIB 40</strain>
    </source>
</reference>
<comment type="function">
    <text evidence="1">Involved in degradation of plant cell walls. Hydrolyzes the feruloyl-arabinose ester bond in arabinoxylans, and the feruloyl-galactose ester bond in pectin. Active against paranitrophenyl-acetate, methyl ferulate and wheat arabinoxylan (By similarity).</text>
</comment>
<comment type="catalytic activity">
    <reaction>
        <text>feruloyl-polysaccharide + H2O = ferulate + polysaccharide.</text>
        <dbReference type="EC" id="3.1.1.73"/>
    </reaction>
</comment>
<comment type="subcellular location">
    <subcellularLocation>
        <location evidence="1">Secreted</location>
    </subcellularLocation>
</comment>
<comment type="similarity">
    <text evidence="3">Belongs to the faeC family.</text>
</comment>
<comment type="sequence caution" evidence="3">
    <conflict type="frameshift">
        <sequence resource="EMBL-CDS" id="BAE58734"/>
    </conflict>
</comment>
<evidence type="ECO:0000250" key="1"/>
<evidence type="ECO:0000255" key="2"/>
<evidence type="ECO:0000305" key="3"/>
<keyword id="KW-0119">Carbohydrate metabolism</keyword>
<keyword id="KW-0325">Glycoprotein</keyword>
<keyword id="KW-0378">Hydrolase</keyword>
<keyword id="KW-0624">Polysaccharide degradation</keyword>
<keyword id="KW-1185">Reference proteome</keyword>
<keyword id="KW-0964">Secreted</keyword>
<keyword id="KW-0732">Signal</keyword>
<keyword id="KW-0858">Xylan degradation</keyword>
<sequence>MIKSIILQAIMVLSTLTSVHGANSSGCGKQPTLVNGVHKINDREYILKVPDNYNANKPHHLIFGLHWRGGNMNSVVNGESVEPWYGLETRAQGSAILVAPNGRNAGWANINGEDVALIDAIIKQVEDDLCIDQSSRFATGFSWGGGMSYALACARAKEFRAVSVLSGGVISGCEGGHDPIAYLGIHGISDPVLPFDGGVTLANKFAANNGCQQTYVGKPGLGSHSSVQTDFKGCSRPVSFIAYDGGHDAAPLGVGNPLAPDATWKFFMAA</sequence>
<dbReference type="EC" id="3.1.1.73"/>
<dbReference type="EMBL" id="BA000051">
    <property type="protein sequence ID" value="BAE58734.1"/>
    <property type="status" value="ALT_FRAME"/>
    <property type="molecule type" value="Genomic_DNA"/>
</dbReference>
<dbReference type="SMR" id="Q2UI81"/>
<dbReference type="STRING" id="510516.Q2UI81"/>
<dbReference type="ESTHER" id="aspor-faec">
    <property type="family name" value="FaeC"/>
</dbReference>
<dbReference type="GlyCosmos" id="Q2UI81">
    <property type="glycosylation" value="1 site, No reported glycans"/>
</dbReference>
<dbReference type="Proteomes" id="UP000006564">
    <property type="component" value="Chromosome 3"/>
</dbReference>
<dbReference type="GO" id="GO:0005576">
    <property type="term" value="C:extracellular region"/>
    <property type="evidence" value="ECO:0007669"/>
    <property type="project" value="UniProtKB-SubCell"/>
</dbReference>
<dbReference type="GO" id="GO:0030600">
    <property type="term" value="F:feruloyl esterase activity"/>
    <property type="evidence" value="ECO:0007669"/>
    <property type="project" value="UniProtKB-EC"/>
</dbReference>
<dbReference type="GO" id="GO:0045493">
    <property type="term" value="P:xylan catabolic process"/>
    <property type="evidence" value="ECO:0007669"/>
    <property type="project" value="UniProtKB-KW"/>
</dbReference>
<dbReference type="Gene3D" id="3.40.50.1820">
    <property type="entry name" value="alpha/beta hydrolase"/>
    <property type="match status" value="1"/>
</dbReference>
<dbReference type="InterPro" id="IPR029058">
    <property type="entry name" value="AB_hydrolase_fold"/>
</dbReference>
<dbReference type="InterPro" id="IPR043595">
    <property type="entry name" value="FaeB/C/D"/>
</dbReference>
<dbReference type="InterPro" id="IPR003140">
    <property type="entry name" value="PLipase/COase/thioEstase"/>
</dbReference>
<dbReference type="PANTHER" id="PTHR38050">
    <property type="match status" value="1"/>
</dbReference>
<dbReference type="PANTHER" id="PTHR38050:SF1">
    <property type="entry name" value="FERULOYL ESTERASE C"/>
    <property type="match status" value="1"/>
</dbReference>
<dbReference type="Pfam" id="PF02230">
    <property type="entry name" value="Abhydrolase_2"/>
    <property type="match status" value="1"/>
</dbReference>
<dbReference type="SUPFAM" id="SSF53474">
    <property type="entry name" value="alpha/beta-Hydrolases"/>
    <property type="match status" value="1"/>
</dbReference>